<reference key="1">
    <citation type="journal article" date="2007" name="PLoS ONE">
        <title>Analysis of the neurotoxin complex genes in Clostridium botulinum A1-A4 and B1 strains: BoNT/A3, /Ba4 and /B1 clusters are located within plasmids.</title>
        <authorList>
            <person name="Smith T.J."/>
            <person name="Hill K.K."/>
            <person name="Foley B.T."/>
            <person name="Detter J.C."/>
            <person name="Munk A.C."/>
            <person name="Bruce D.C."/>
            <person name="Doggett N.A."/>
            <person name="Smith L.A."/>
            <person name="Marks J.D."/>
            <person name="Xie G."/>
            <person name="Brettin T.S."/>
        </authorList>
    </citation>
    <scope>NUCLEOTIDE SEQUENCE [LARGE SCALE GENOMIC DNA]</scope>
    <source>
        <strain>Okra / Type B1</strain>
    </source>
</reference>
<organism>
    <name type="scientific">Clostridium botulinum (strain Okra / Type B1)</name>
    <dbReference type="NCBI Taxonomy" id="498213"/>
    <lineage>
        <taxon>Bacteria</taxon>
        <taxon>Bacillati</taxon>
        <taxon>Bacillota</taxon>
        <taxon>Clostridia</taxon>
        <taxon>Eubacteriales</taxon>
        <taxon>Clostridiaceae</taxon>
        <taxon>Clostridium</taxon>
    </lineage>
</organism>
<evidence type="ECO:0000255" key="1">
    <source>
        <dbReference type="HAMAP-Rule" id="MF_01215"/>
    </source>
</evidence>
<feature type="chain" id="PRO_1000164746" description="Orotidine 5'-phosphate decarboxylase">
    <location>
        <begin position="1"/>
        <end position="283"/>
    </location>
</feature>
<feature type="active site" description="Proton donor" evidence="1">
    <location>
        <position position="97"/>
    </location>
</feature>
<protein>
    <recommendedName>
        <fullName evidence="1">Orotidine 5'-phosphate decarboxylase</fullName>
        <ecNumber evidence="1">4.1.1.23</ecNumber>
    </recommendedName>
    <alternativeName>
        <fullName evidence="1">OMP decarboxylase</fullName>
        <shortName evidence="1">OMPDCase</shortName>
        <shortName evidence="1">OMPdecase</shortName>
    </alternativeName>
</protein>
<name>PYRF_CLOBK</name>
<proteinExistence type="inferred from homology"/>
<gene>
    <name evidence="1" type="primary">pyrF</name>
    <name type="ordered locus">CLD_1293</name>
</gene>
<sequence>MIIDKLYENVEKKGCVCVGLDTDISYLPKGFLNKFTNIEDAIFAFNQRIVDSTFDVSACYKVQIAYYEAMGIKGMILYKKTLEYIRKKGGIVIADIKRGDISATAKMYAKAHFEGDFESDFITLNPYMGMDTLEPYKDYFKNKEKGVFLLLRTSNEGSKDIQYLDLKDNKKVYNKVGEKIENIGKEFLGNCGYSSIGAVVGCTAEENNIRKELKHTFFLIPGYGAQGGKAEVAKSYLSEGNGGIVNSSRGILLAYKKYDEEGKNFEECARNEVINMKKTLQII</sequence>
<dbReference type="EC" id="4.1.1.23" evidence="1"/>
<dbReference type="EMBL" id="CP000939">
    <property type="protein sequence ID" value="ACA46510.1"/>
    <property type="molecule type" value="Genomic_DNA"/>
</dbReference>
<dbReference type="RefSeq" id="WP_003405887.1">
    <property type="nucleotide sequence ID" value="NC_010516.1"/>
</dbReference>
<dbReference type="SMR" id="B1INE4"/>
<dbReference type="KEGG" id="cbb:CLD_1293"/>
<dbReference type="HOGENOM" id="CLU_060704_1_1_9"/>
<dbReference type="UniPathway" id="UPA00070">
    <property type="reaction ID" value="UER00120"/>
</dbReference>
<dbReference type="Proteomes" id="UP000008541">
    <property type="component" value="Chromosome"/>
</dbReference>
<dbReference type="GO" id="GO:0004590">
    <property type="term" value="F:orotidine-5'-phosphate decarboxylase activity"/>
    <property type="evidence" value="ECO:0007669"/>
    <property type="project" value="UniProtKB-UniRule"/>
</dbReference>
<dbReference type="GO" id="GO:0006207">
    <property type="term" value="P:'de novo' pyrimidine nucleobase biosynthetic process"/>
    <property type="evidence" value="ECO:0007669"/>
    <property type="project" value="InterPro"/>
</dbReference>
<dbReference type="GO" id="GO:0044205">
    <property type="term" value="P:'de novo' UMP biosynthetic process"/>
    <property type="evidence" value="ECO:0007669"/>
    <property type="project" value="UniProtKB-UniRule"/>
</dbReference>
<dbReference type="CDD" id="cd04725">
    <property type="entry name" value="OMP_decarboxylase_like"/>
    <property type="match status" value="1"/>
</dbReference>
<dbReference type="FunFam" id="3.20.20.70:FF:000246">
    <property type="entry name" value="Orotidine 5'-phosphate decarboxylase"/>
    <property type="match status" value="1"/>
</dbReference>
<dbReference type="Gene3D" id="3.20.20.70">
    <property type="entry name" value="Aldolase class I"/>
    <property type="match status" value="1"/>
</dbReference>
<dbReference type="HAMAP" id="MF_01215">
    <property type="entry name" value="OMPdecase_type2"/>
    <property type="match status" value="1"/>
</dbReference>
<dbReference type="InterPro" id="IPR013785">
    <property type="entry name" value="Aldolase_TIM"/>
</dbReference>
<dbReference type="InterPro" id="IPR011995">
    <property type="entry name" value="OMPdecase_type-2"/>
</dbReference>
<dbReference type="InterPro" id="IPR001754">
    <property type="entry name" value="OMPdeCOase_dom"/>
</dbReference>
<dbReference type="InterPro" id="IPR011060">
    <property type="entry name" value="RibuloseP-bd_barrel"/>
</dbReference>
<dbReference type="NCBIfam" id="TIGR02127">
    <property type="entry name" value="pyrF_sub2"/>
    <property type="match status" value="1"/>
</dbReference>
<dbReference type="PANTHER" id="PTHR43375">
    <property type="entry name" value="OROTIDINE 5'-PHOSPHATE DECARBOXYLASE"/>
    <property type="match status" value="1"/>
</dbReference>
<dbReference type="PANTHER" id="PTHR43375:SF1">
    <property type="entry name" value="OROTIDINE 5'-PHOSPHATE DECARBOXYLASE"/>
    <property type="match status" value="1"/>
</dbReference>
<dbReference type="Pfam" id="PF00215">
    <property type="entry name" value="OMPdecase"/>
    <property type="match status" value="1"/>
</dbReference>
<dbReference type="SMART" id="SM00934">
    <property type="entry name" value="OMPdecase"/>
    <property type="match status" value="1"/>
</dbReference>
<dbReference type="SUPFAM" id="SSF51366">
    <property type="entry name" value="Ribulose-phoshate binding barrel"/>
    <property type="match status" value="1"/>
</dbReference>
<keyword id="KW-0210">Decarboxylase</keyword>
<keyword id="KW-0456">Lyase</keyword>
<keyword id="KW-0665">Pyrimidine biosynthesis</keyword>
<accession>B1INE4</accession>
<comment type="catalytic activity">
    <reaction evidence="1">
        <text>orotidine 5'-phosphate + H(+) = UMP + CO2</text>
        <dbReference type="Rhea" id="RHEA:11596"/>
        <dbReference type="ChEBI" id="CHEBI:15378"/>
        <dbReference type="ChEBI" id="CHEBI:16526"/>
        <dbReference type="ChEBI" id="CHEBI:57538"/>
        <dbReference type="ChEBI" id="CHEBI:57865"/>
        <dbReference type="EC" id="4.1.1.23"/>
    </reaction>
</comment>
<comment type="pathway">
    <text evidence="1">Pyrimidine metabolism; UMP biosynthesis via de novo pathway; UMP from orotate: step 2/2.</text>
</comment>
<comment type="similarity">
    <text evidence="1">Belongs to the OMP decarboxylase family. Type 2 subfamily.</text>
</comment>